<dbReference type="EMBL" id="AB583697">
    <property type="protein sequence ID" value="BAJ84579.1"/>
    <property type="molecule type" value="Genomic_DNA"/>
</dbReference>
<dbReference type="SMR" id="F1SZ41"/>
<dbReference type="EnsemblPlants" id="OsIR64_02g0011660.01">
    <property type="protein sequence ID" value="OsIR64_02g0011660.01"/>
    <property type="gene ID" value="OsIR64_02g0011660"/>
</dbReference>
<dbReference type="EnsemblPlants" id="OsZS97_02G011660_01">
    <property type="protein sequence ID" value="OsZS97_02G011660_01"/>
    <property type="gene ID" value="OsZS97_02G011660"/>
</dbReference>
<dbReference type="Gramene" id="OsIR64_02g0011660.01">
    <property type="protein sequence ID" value="OsIR64_02g0011660.01"/>
    <property type="gene ID" value="OsIR64_02g0011660"/>
</dbReference>
<dbReference type="Gramene" id="OsZS97_02G011660_01">
    <property type="protein sequence ID" value="OsZS97_02G011660_01"/>
    <property type="gene ID" value="OsZS97_02G011660"/>
</dbReference>
<dbReference type="GO" id="GO:0009507">
    <property type="term" value="C:chloroplast"/>
    <property type="evidence" value="ECO:0007669"/>
    <property type="project" value="TreeGrafter"/>
</dbReference>
<dbReference type="GO" id="GO:0005739">
    <property type="term" value="C:mitochondrion"/>
    <property type="evidence" value="ECO:0000314"/>
    <property type="project" value="UniProtKB"/>
</dbReference>
<dbReference type="GO" id="GO:0009658">
    <property type="term" value="P:chloroplast organization"/>
    <property type="evidence" value="ECO:0007669"/>
    <property type="project" value="TreeGrafter"/>
</dbReference>
<dbReference type="GO" id="GO:0010027">
    <property type="term" value="P:thylakoid membrane organization"/>
    <property type="evidence" value="ECO:0007669"/>
    <property type="project" value="TreeGrafter"/>
</dbReference>
<dbReference type="InterPro" id="IPR040299">
    <property type="entry name" value="RF2K-like"/>
</dbReference>
<dbReference type="PANTHER" id="PTHR34938">
    <property type="entry name" value="PROTEIN FERTILITY RESTORER RF2, MITOCHONDRIAL"/>
    <property type="match status" value="1"/>
</dbReference>
<dbReference type="PANTHER" id="PTHR34938:SF1">
    <property type="entry name" value="PROTEIN FERTILITY RESTORER RF2, MITOCHONDRIAL"/>
    <property type="match status" value="1"/>
</dbReference>
<accession>F1SZ41</accession>
<comment type="function">
    <text evidence="3">Restores fertility in rice varieties with LD-type cytoplasmic male sterility (CMS) (PubMed:21265890). CMS is caused by genetic incompatibility between nuclei and mitochondria within male reproductive organs (PubMed:21265890). Corresponds to the functional allele of RF2, which is dependent of the presence of Ile-78 in the japonica cultivars Fukuyama and Owarihatamochi (AC F1SZ42), and indica cultivar Kasalath (AC F1SZ41) (PubMed:21265890). Non-functional RF2 alleles are found in japonica cultivars Taichung 65 and Nipponbare (AC F1SZ44), where Ile-78 is replaced by Thr-78 (PubMed:21265890).</text>
</comment>
<comment type="subcellular location">
    <subcellularLocation>
        <location evidence="3">Mitochondrion</location>
    </subcellularLocation>
</comment>
<comment type="developmental stage">
    <text evidence="3">Specifically expressed during anther development, from the uninucleate pollen stage to the tricellular pollen stage, with the highest expression at the tricellular pollen stage.</text>
</comment>
<sequence length="152" mass="16144">MSTLVTCSLPGAVTTHASTRRFGGSQFQTSQASCISFKREVSAKAVLRSVRCNATQTQSAQRKSSTATVKRSDPKGKIQGPKLDDGSGGFPPFRFGKGGGGGGGGGGGSNYFGGFLLFTCVLLLDYLKEFEKNLIARRQRAGYDANNDMFQQ</sequence>
<proteinExistence type="evidence at transcript level"/>
<evidence type="ECO:0000255" key="1"/>
<evidence type="ECO:0000256" key="2">
    <source>
        <dbReference type="SAM" id="MobiDB-lite"/>
    </source>
</evidence>
<evidence type="ECO:0000269" key="3">
    <source>
    </source>
</evidence>
<evidence type="ECO:0000303" key="4">
    <source>
    </source>
</evidence>
<evidence type="ECO:0000305" key="5"/>
<reference key="1">
    <citation type="journal article" date="2011" name="Plant J.">
        <title>The fertility restorer gene, Rf2, for Lead Rice-type cytoplasmic male sterility of rice encodes a mitochondrial glycine-rich protein.</title>
        <authorList>
            <person name="Itabashi E."/>
            <person name="Iwata N."/>
            <person name="Fujii S."/>
            <person name="Kazama T."/>
            <person name="Toriyama K."/>
        </authorList>
    </citation>
    <scope>NUCLEOTIDE SEQUENCE [GENOMIC DNA]</scope>
    <scope>FUNCTION</scope>
    <scope>SUBCELLULAR LOCATION</scope>
    <scope>DEVELOPMENTAL STAGE</scope>
    <source>
        <strain>cv. Kasalath</strain>
    </source>
</reference>
<protein>
    <recommendedName>
        <fullName evidence="5">Protein FERTILITY RESTORER RF2, mitochondrial</fullName>
    </recommendedName>
</protein>
<name>RF2K_ORYSI</name>
<feature type="transit peptide" description="Mitochondrion" evidence="1">
    <location>
        <begin position="1"/>
        <end position="52"/>
    </location>
</feature>
<feature type="chain" id="PRO_0000445237" description="Protein FERTILITY RESTORER RF2, mitochondrial">
    <location>
        <begin position="53"/>
        <end position="152"/>
    </location>
</feature>
<feature type="region of interest" description="Disordered" evidence="2">
    <location>
        <begin position="52"/>
        <end position="99"/>
    </location>
</feature>
<feature type="compositionally biased region" description="Polar residues" evidence="2">
    <location>
        <begin position="52"/>
        <end position="69"/>
    </location>
</feature>
<gene>
    <name evidence="4" type="primary">RF2</name>
</gene>
<organism>
    <name type="scientific">Oryza sativa subsp. indica</name>
    <name type="common">Rice</name>
    <dbReference type="NCBI Taxonomy" id="39946"/>
    <lineage>
        <taxon>Eukaryota</taxon>
        <taxon>Viridiplantae</taxon>
        <taxon>Streptophyta</taxon>
        <taxon>Embryophyta</taxon>
        <taxon>Tracheophyta</taxon>
        <taxon>Spermatophyta</taxon>
        <taxon>Magnoliopsida</taxon>
        <taxon>Liliopsida</taxon>
        <taxon>Poales</taxon>
        <taxon>Poaceae</taxon>
        <taxon>BOP clade</taxon>
        <taxon>Oryzoideae</taxon>
        <taxon>Oryzeae</taxon>
        <taxon>Oryzinae</taxon>
        <taxon>Oryza</taxon>
        <taxon>Oryza sativa</taxon>
    </lineage>
</organism>
<keyword id="KW-0496">Mitochondrion</keyword>
<keyword id="KW-0809">Transit peptide</keyword>